<organism>
    <name type="scientific">Leifsonia xyli subsp. xyli (strain CTCB07)</name>
    <dbReference type="NCBI Taxonomy" id="281090"/>
    <lineage>
        <taxon>Bacteria</taxon>
        <taxon>Bacillati</taxon>
        <taxon>Actinomycetota</taxon>
        <taxon>Actinomycetes</taxon>
        <taxon>Micrococcales</taxon>
        <taxon>Microbacteriaceae</taxon>
        <taxon>Leifsonia</taxon>
    </lineage>
</organism>
<feature type="chain" id="PRO_0000206964" description="Exodeoxyribonuclease 7 small subunit">
    <location>
        <begin position="1"/>
        <end position="92"/>
    </location>
</feature>
<feature type="region of interest" description="Disordered" evidence="2">
    <location>
        <begin position="71"/>
        <end position="92"/>
    </location>
</feature>
<feature type="compositionally biased region" description="Low complexity" evidence="2">
    <location>
        <begin position="71"/>
        <end position="84"/>
    </location>
</feature>
<protein>
    <recommendedName>
        <fullName evidence="1">Exodeoxyribonuclease 7 small subunit</fullName>
        <ecNumber evidence="1">3.1.11.6</ecNumber>
    </recommendedName>
    <alternativeName>
        <fullName evidence="1">Exodeoxyribonuclease VII small subunit</fullName>
        <shortName evidence="1">Exonuclease VII small subunit</shortName>
    </alternativeName>
</protein>
<accession>Q6ADU8</accession>
<evidence type="ECO:0000255" key="1">
    <source>
        <dbReference type="HAMAP-Rule" id="MF_00337"/>
    </source>
</evidence>
<evidence type="ECO:0000256" key="2">
    <source>
        <dbReference type="SAM" id="MobiDB-lite"/>
    </source>
</evidence>
<sequence length="92" mass="9608">MDAMPLSDISALGYEEARDELVRVVTELEQGSATLEESLALWERGEALARRCEEWLIGAKARLDAARAGAAESAGTAKSAVAADSRGAADSA</sequence>
<dbReference type="EC" id="3.1.11.6" evidence="1"/>
<dbReference type="EMBL" id="AE016822">
    <property type="protein sequence ID" value="AAT89448.1"/>
    <property type="molecule type" value="Genomic_DNA"/>
</dbReference>
<dbReference type="RefSeq" id="WP_011186436.1">
    <property type="nucleotide sequence ID" value="NC_006087.1"/>
</dbReference>
<dbReference type="SMR" id="Q6ADU8"/>
<dbReference type="STRING" id="281090.Lxx16770"/>
<dbReference type="KEGG" id="lxx:Lxx16770"/>
<dbReference type="eggNOG" id="COG1722">
    <property type="taxonomic scope" value="Bacteria"/>
</dbReference>
<dbReference type="HOGENOM" id="CLU_145918_0_3_11"/>
<dbReference type="Proteomes" id="UP000001306">
    <property type="component" value="Chromosome"/>
</dbReference>
<dbReference type="GO" id="GO:0005829">
    <property type="term" value="C:cytosol"/>
    <property type="evidence" value="ECO:0007669"/>
    <property type="project" value="TreeGrafter"/>
</dbReference>
<dbReference type="GO" id="GO:0009318">
    <property type="term" value="C:exodeoxyribonuclease VII complex"/>
    <property type="evidence" value="ECO:0007669"/>
    <property type="project" value="InterPro"/>
</dbReference>
<dbReference type="GO" id="GO:0008855">
    <property type="term" value="F:exodeoxyribonuclease VII activity"/>
    <property type="evidence" value="ECO:0007669"/>
    <property type="project" value="UniProtKB-UniRule"/>
</dbReference>
<dbReference type="GO" id="GO:0006308">
    <property type="term" value="P:DNA catabolic process"/>
    <property type="evidence" value="ECO:0007669"/>
    <property type="project" value="UniProtKB-UniRule"/>
</dbReference>
<dbReference type="Gene3D" id="1.10.287.1040">
    <property type="entry name" value="Exonuclease VII, small subunit"/>
    <property type="match status" value="1"/>
</dbReference>
<dbReference type="HAMAP" id="MF_00337">
    <property type="entry name" value="Exonuc_7_S"/>
    <property type="match status" value="1"/>
</dbReference>
<dbReference type="InterPro" id="IPR003761">
    <property type="entry name" value="Exonuc_VII_S"/>
</dbReference>
<dbReference type="InterPro" id="IPR037004">
    <property type="entry name" value="Exonuc_VII_ssu_sf"/>
</dbReference>
<dbReference type="NCBIfam" id="NF002139">
    <property type="entry name" value="PRK00977.1-3"/>
    <property type="match status" value="1"/>
</dbReference>
<dbReference type="NCBIfam" id="TIGR01280">
    <property type="entry name" value="xseB"/>
    <property type="match status" value="1"/>
</dbReference>
<dbReference type="PANTHER" id="PTHR34137">
    <property type="entry name" value="EXODEOXYRIBONUCLEASE 7 SMALL SUBUNIT"/>
    <property type="match status" value="1"/>
</dbReference>
<dbReference type="PANTHER" id="PTHR34137:SF1">
    <property type="entry name" value="EXODEOXYRIBONUCLEASE 7 SMALL SUBUNIT"/>
    <property type="match status" value="1"/>
</dbReference>
<dbReference type="Pfam" id="PF02609">
    <property type="entry name" value="Exonuc_VII_S"/>
    <property type="match status" value="1"/>
</dbReference>
<dbReference type="SUPFAM" id="SSF116842">
    <property type="entry name" value="XseB-like"/>
    <property type="match status" value="1"/>
</dbReference>
<reference key="1">
    <citation type="journal article" date="2004" name="Mol. Plant Microbe Interact.">
        <title>The genome sequence of the Gram-positive sugarcane pathogen Leifsonia xyli subsp. xyli.</title>
        <authorList>
            <person name="Monteiro-Vitorello C.B."/>
            <person name="Camargo L.E.A."/>
            <person name="Van Sluys M.A."/>
            <person name="Kitajima J.P."/>
            <person name="Truffi D."/>
            <person name="do Amaral A.M."/>
            <person name="Harakava R."/>
            <person name="de Oliveira J.C.F."/>
            <person name="Wood D."/>
            <person name="de Oliveira M.C."/>
            <person name="Miyaki C.Y."/>
            <person name="Takita M.A."/>
            <person name="da Silva A.C.R."/>
            <person name="Furlan L.R."/>
            <person name="Carraro D.M."/>
            <person name="Camarotte G."/>
            <person name="Almeida N.F. Jr."/>
            <person name="Carrer H."/>
            <person name="Coutinho L.L."/>
            <person name="El-Dorry H.A."/>
            <person name="Ferro M.I.T."/>
            <person name="Gagliardi P.R."/>
            <person name="Giglioti E."/>
            <person name="Goldman M.H.S."/>
            <person name="Goldman G.H."/>
            <person name="Kimura E.T."/>
            <person name="Ferro E.S."/>
            <person name="Kuramae E.E."/>
            <person name="Lemos E.G.M."/>
            <person name="Lemos M.V.F."/>
            <person name="Mauro S.M.Z."/>
            <person name="Machado M.A."/>
            <person name="Marino C.L."/>
            <person name="Menck C.F."/>
            <person name="Nunes L.R."/>
            <person name="Oliveira R.C."/>
            <person name="Pereira G.G."/>
            <person name="Siqueira W."/>
            <person name="de Souza A.A."/>
            <person name="Tsai S.M."/>
            <person name="Zanca A.S."/>
            <person name="Simpson A.J.G."/>
            <person name="Brumbley S.M."/>
            <person name="Setubal J.C."/>
        </authorList>
    </citation>
    <scope>NUCLEOTIDE SEQUENCE [LARGE SCALE GENOMIC DNA]</scope>
    <source>
        <strain>CTCB07</strain>
    </source>
</reference>
<gene>
    <name evidence="1" type="primary">xseB</name>
    <name type="ordered locus">Lxx16770</name>
</gene>
<proteinExistence type="inferred from homology"/>
<name>EX7S_LEIXX</name>
<comment type="function">
    <text evidence="1">Bidirectionally degrades single-stranded DNA into large acid-insoluble oligonucleotides, which are then degraded further into small acid-soluble oligonucleotides.</text>
</comment>
<comment type="catalytic activity">
    <reaction evidence="1">
        <text>Exonucleolytic cleavage in either 5'- to 3'- or 3'- to 5'-direction to yield nucleoside 5'-phosphates.</text>
        <dbReference type="EC" id="3.1.11.6"/>
    </reaction>
</comment>
<comment type="subunit">
    <text evidence="1">Heterooligomer composed of large and small subunits.</text>
</comment>
<comment type="subcellular location">
    <subcellularLocation>
        <location evidence="1">Cytoplasm</location>
    </subcellularLocation>
</comment>
<comment type="similarity">
    <text evidence="1">Belongs to the XseB family.</text>
</comment>
<keyword id="KW-0963">Cytoplasm</keyword>
<keyword id="KW-0269">Exonuclease</keyword>
<keyword id="KW-0378">Hydrolase</keyword>
<keyword id="KW-0540">Nuclease</keyword>
<keyword id="KW-1185">Reference proteome</keyword>